<reference key="1">
    <citation type="journal article" date="2008" name="Chem. Biol. Interact.">
        <title>Extending the Bacillus cereus group genomics to putative food-borne pathogens of different toxicity.</title>
        <authorList>
            <person name="Lapidus A."/>
            <person name="Goltsman E."/>
            <person name="Auger S."/>
            <person name="Galleron N."/>
            <person name="Segurens B."/>
            <person name="Dossat C."/>
            <person name="Land M.L."/>
            <person name="Broussolle V."/>
            <person name="Brillard J."/>
            <person name="Guinebretiere M.-H."/>
            <person name="Sanchis V."/>
            <person name="Nguen-the C."/>
            <person name="Lereclus D."/>
            <person name="Richardson P."/>
            <person name="Wincker P."/>
            <person name="Weissenbach J."/>
            <person name="Ehrlich S.D."/>
            <person name="Sorokin A."/>
        </authorList>
    </citation>
    <scope>NUCLEOTIDE SEQUENCE [LARGE SCALE GENOMIC DNA]</scope>
    <source>
        <strain>KBAB4</strain>
    </source>
</reference>
<keyword id="KW-0030">Aminoacyl-tRNA synthetase</keyword>
<keyword id="KW-0067">ATP-binding</keyword>
<keyword id="KW-0963">Cytoplasm</keyword>
<keyword id="KW-0436">Ligase</keyword>
<keyword id="KW-0460">Magnesium</keyword>
<keyword id="KW-0479">Metal-binding</keyword>
<keyword id="KW-0547">Nucleotide-binding</keyword>
<keyword id="KW-0648">Protein biosynthesis</keyword>
<comment type="catalytic activity">
    <reaction evidence="1">
        <text>tRNA(Lys) + L-lysine + ATP = L-lysyl-tRNA(Lys) + AMP + diphosphate</text>
        <dbReference type="Rhea" id="RHEA:20792"/>
        <dbReference type="Rhea" id="RHEA-COMP:9696"/>
        <dbReference type="Rhea" id="RHEA-COMP:9697"/>
        <dbReference type="ChEBI" id="CHEBI:30616"/>
        <dbReference type="ChEBI" id="CHEBI:32551"/>
        <dbReference type="ChEBI" id="CHEBI:33019"/>
        <dbReference type="ChEBI" id="CHEBI:78442"/>
        <dbReference type="ChEBI" id="CHEBI:78529"/>
        <dbReference type="ChEBI" id="CHEBI:456215"/>
        <dbReference type="EC" id="6.1.1.6"/>
    </reaction>
</comment>
<comment type="cofactor">
    <cofactor evidence="1">
        <name>Mg(2+)</name>
        <dbReference type="ChEBI" id="CHEBI:18420"/>
    </cofactor>
    <text evidence="1">Binds 3 Mg(2+) ions per subunit.</text>
</comment>
<comment type="subunit">
    <text evidence="1">Homodimer.</text>
</comment>
<comment type="subcellular location">
    <subcellularLocation>
        <location evidence="1">Cytoplasm</location>
    </subcellularLocation>
</comment>
<comment type="similarity">
    <text evidence="1">Belongs to the class-II aminoacyl-tRNA synthetase family.</text>
</comment>
<feature type="chain" id="PRO_1000101097" description="Lysine--tRNA ligase">
    <location>
        <begin position="1"/>
        <end position="499"/>
    </location>
</feature>
<feature type="binding site" evidence="1">
    <location>
        <position position="408"/>
    </location>
    <ligand>
        <name>Mg(2+)</name>
        <dbReference type="ChEBI" id="CHEBI:18420"/>
        <label>1</label>
    </ligand>
</feature>
<feature type="binding site" evidence="1">
    <location>
        <position position="415"/>
    </location>
    <ligand>
        <name>Mg(2+)</name>
        <dbReference type="ChEBI" id="CHEBI:18420"/>
        <label>1</label>
    </ligand>
</feature>
<feature type="binding site" evidence="1">
    <location>
        <position position="415"/>
    </location>
    <ligand>
        <name>Mg(2+)</name>
        <dbReference type="ChEBI" id="CHEBI:18420"/>
        <label>2</label>
    </ligand>
</feature>
<evidence type="ECO:0000255" key="1">
    <source>
        <dbReference type="HAMAP-Rule" id="MF_00252"/>
    </source>
</evidence>
<sequence>MDNMNHEELNDQLLVRREKLHNLREQGIDPFGKRFERTNSTTDLVSLYGEFSKEELEEKEITVSIAGRIMTKRGKGKAGFAHIQDLQGQVQIYVRKDTVGDEEYELFTTADLGDLVGIEGKVFKTNVGELSVKAIGFTLLTKSLRPLPDKYHGLKDVEQRYRQRYLDLITSMESRETFVTRSKIIREMRRYLDDNGYLEVETPMMHAIAGGASARPFTTHHNALDMELYMRIAIELHLKRLIVGGLEKVYEIGRVFRNEGVSTRHNPEFTMIELYEAYADYNDIMKLTENMVAHIAKKVLGTTTIQYGDYEINLEPEWTRLHMVDAIKQHSGADFWNPMSVEEARELAKEHNVEIKNTMEVGHIINEFFEQKVEDKLIQPTFIYGHPVEISPLAKKNDEDPRFTDRFELFIVAREHANAFTELNDPIDQKERFEAQLKEREQGNDEAHMMDDDYIEALEYGMPPTGGLGIGIDRLVMLLTNAPSIRDVLLFPAMRHKQD</sequence>
<name>SYK_BACMK</name>
<dbReference type="EC" id="6.1.1.6" evidence="1"/>
<dbReference type="EMBL" id="CP000903">
    <property type="protein sequence ID" value="ABY41341.1"/>
    <property type="molecule type" value="Genomic_DNA"/>
</dbReference>
<dbReference type="RefSeq" id="WP_002009709.1">
    <property type="nucleotide sequence ID" value="NC_010184.1"/>
</dbReference>
<dbReference type="SMR" id="A9VN90"/>
<dbReference type="GeneID" id="66264869"/>
<dbReference type="KEGG" id="bwe:BcerKBAB4_0072"/>
<dbReference type="eggNOG" id="COG1190">
    <property type="taxonomic scope" value="Bacteria"/>
</dbReference>
<dbReference type="HOGENOM" id="CLU_008255_6_0_9"/>
<dbReference type="Proteomes" id="UP000002154">
    <property type="component" value="Chromosome"/>
</dbReference>
<dbReference type="GO" id="GO:0005829">
    <property type="term" value="C:cytosol"/>
    <property type="evidence" value="ECO:0007669"/>
    <property type="project" value="TreeGrafter"/>
</dbReference>
<dbReference type="GO" id="GO:0005524">
    <property type="term" value="F:ATP binding"/>
    <property type="evidence" value="ECO:0007669"/>
    <property type="project" value="UniProtKB-UniRule"/>
</dbReference>
<dbReference type="GO" id="GO:0140096">
    <property type="term" value="F:catalytic activity, acting on a protein"/>
    <property type="evidence" value="ECO:0007669"/>
    <property type="project" value="UniProtKB-ARBA"/>
</dbReference>
<dbReference type="GO" id="GO:0004824">
    <property type="term" value="F:lysine-tRNA ligase activity"/>
    <property type="evidence" value="ECO:0007669"/>
    <property type="project" value="UniProtKB-UniRule"/>
</dbReference>
<dbReference type="GO" id="GO:0000287">
    <property type="term" value="F:magnesium ion binding"/>
    <property type="evidence" value="ECO:0007669"/>
    <property type="project" value="UniProtKB-UniRule"/>
</dbReference>
<dbReference type="GO" id="GO:0016740">
    <property type="term" value="F:transferase activity"/>
    <property type="evidence" value="ECO:0007669"/>
    <property type="project" value="UniProtKB-ARBA"/>
</dbReference>
<dbReference type="GO" id="GO:0000049">
    <property type="term" value="F:tRNA binding"/>
    <property type="evidence" value="ECO:0007669"/>
    <property type="project" value="TreeGrafter"/>
</dbReference>
<dbReference type="GO" id="GO:0006430">
    <property type="term" value="P:lysyl-tRNA aminoacylation"/>
    <property type="evidence" value="ECO:0007669"/>
    <property type="project" value="UniProtKB-UniRule"/>
</dbReference>
<dbReference type="CDD" id="cd00775">
    <property type="entry name" value="LysRS_core"/>
    <property type="match status" value="1"/>
</dbReference>
<dbReference type="CDD" id="cd04322">
    <property type="entry name" value="LysRS_N"/>
    <property type="match status" value="1"/>
</dbReference>
<dbReference type="FunFam" id="2.40.50.140:FF:000024">
    <property type="entry name" value="Lysine--tRNA ligase"/>
    <property type="match status" value="1"/>
</dbReference>
<dbReference type="FunFam" id="3.30.930.10:FF:000001">
    <property type="entry name" value="Lysine--tRNA ligase"/>
    <property type="match status" value="1"/>
</dbReference>
<dbReference type="Gene3D" id="3.30.930.10">
    <property type="entry name" value="Bira Bifunctional Protein, Domain 2"/>
    <property type="match status" value="1"/>
</dbReference>
<dbReference type="Gene3D" id="2.40.50.140">
    <property type="entry name" value="Nucleic acid-binding proteins"/>
    <property type="match status" value="1"/>
</dbReference>
<dbReference type="HAMAP" id="MF_00252">
    <property type="entry name" value="Lys_tRNA_synth_class2"/>
    <property type="match status" value="1"/>
</dbReference>
<dbReference type="InterPro" id="IPR004364">
    <property type="entry name" value="Aa-tRNA-synt_II"/>
</dbReference>
<dbReference type="InterPro" id="IPR006195">
    <property type="entry name" value="aa-tRNA-synth_II"/>
</dbReference>
<dbReference type="InterPro" id="IPR045864">
    <property type="entry name" value="aa-tRNA-synth_II/BPL/LPL"/>
</dbReference>
<dbReference type="InterPro" id="IPR002313">
    <property type="entry name" value="Lys-tRNA-ligase_II"/>
</dbReference>
<dbReference type="InterPro" id="IPR034762">
    <property type="entry name" value="Lys-tRNA-ligase_II_bac/euk"/>
</dbReference>
<dbReference type="InterPro" id="IPR044136">
    <property type="entry name" value="Lys-tRNA-ligase_II_N"/>
</dbReference>
<dbReference type="InterPro" id="IPR018149">
    <property type="entry name" value="Lys-tRNA-synth_II_C"/>
</dbReference>
<dbReference type="InterPro" id="IPR012340">
    <property type="entry name" value="NA-bd_OB-fold"/>
</dbReference>
<dbReference type="InterPro" id="IPR004365">
    <property type="entry name" value="NA-bd_OB_tRNA"/>
</dbReference>
<dbReference type="NCBIfam" id="TIGR00499">
    <property type="entry name" value="lysS_bact"/>
    <property type="match status" value="1"/>
</dbReference>
<dbReference type="NCBIfam" id="NF001756">
    <property type="entry name" value="PRK00484.1"/>
    <property type="match status" value="1"/>
</dbReference>
<dbReference type="PANTHER" id="PTHR42918:SF15">
    <property type="entry name" value="LYSINE--TRNA LIGASE, CHLOROPLASTIC_MITOCHONDRIAL"/>
    <property type="match status" value="1"/>
</dbReference>
<dbReference type="PANTHER" id="PTHR42918">
    <property type="entry name" value="LYSYL-TRNA SYNTHETASE"/>
    <property type="match status" value="1"/>
</dbReference>
<dbReference type="Pfam" id="PF00152">
    <property type="entry name" value="tRNA-synt_2"/>
    <property type="match status" value="1"/>
</dbReference>
<dbReference type="Pfam" id="PF01336">
    <property type="entry name" value="tRNA_anti-codon"/>
    <property type="match status" value="1"/>
</dbReference>
<dbReference type="PIRSF" id="PIRSF039101">
    <property type="entry name" value="LysRS2"/>
    <property type="match status" value="1"/>
</dbReference>
<dbReference type="PRINTS" id="PR00982">
    <property type="entry name" value="TRNASYNTHLYS"/>
</dbReference>
<dbReference type="SUPFAM" id="SSF55681">
    <property type="entry name" value="Class II aaRS and biotin synthetases"/>
    <property type="match status" value="1"/>
</dbReference>
<dbReference type="SUPFAM" id="SSF50249">
    <property type="entry name" value="Nucleic acid-binding proteins"/>
    <property type="match status" value="1"/>
</dbReference>
<dbReference type="PROSITE" id="PS50862">
    <property type="entry name" value="AA_TRNA_LIGASE_II"/>
    <property type="match status" value="1"/>
</dbReference>
<protein>
    <recommendedName>
        <fullName evidence="1">Lysine--tRNA ligase</fullName>
        <ecNumber evidence="1">6.1.1.6</ecNumber>
    </recommendedName>
    <alternativeName>
        <fullName evidence="1">Lysyl-tRNA synthetase</fullName>
        <shortName evidence="1">LysRS</shortName>
    </alternativeName>
</protein>
<gene>
    <name evidence="1" type="primary">lysS</name>
    <name type="ordered locus">BcerKBAB4_0072</name>
</gene>
<proteinExistence type="inferred from homology"/>
<accession>A9VN90</accession>
<organism>
    <name type="scientific">Bacillus mycoides (strain KBAB4)</name>
    <name type="common">Bacillus weihenstephanensis</name>
    <dbReference type="NCBI Taxonomy" id="315730"/>
    <lineage>
        <taxon>Bacteria</taxon>
        <taxon>Bacillati</taxon>
        <taxon>Bacillota</taxon>
        <taxon>Bacilli</taxon>
        <taxon>Bacillales</taxon>
        <taxon>Bacillaceae</taxon>
        <taxon>Bacillus</taxon>
        <taxon>Bacillus cereus group</taxon>
    </lineage>
</organism>